<accession>Q54K35</accession>
<dbReference type="EMBL" id="AAFI02000103">
    <property type="protein sequence ID" value="EAL63622.1"/>
    <property type="molecule type" value="Genomic_DNA"/>
</dbReference>
<dbReference type="RefSeq" id="XP_637129.1">
    <property type="nucleotide sequence ID" value="XM_632037.1"/>
</dbReference>
<dbReference type="SMR" id="Q54K35"/>
<dbReference type="FunCoup" id="Q54K35">
    <property type="interactions" value="259"/>
</dbReference>
<dbReference type="STRING" id="44689.Q54K35"/>
<dbReference type="PaxDb" id="44689-DDB0238733"/>
<dbReference type="EnsemblProtists" id="EAL63622">
    <property type="protein sequence ID" value="EAL63622"/>
    <property type="gene ID" value="DDB_G0287627"/>
</dbReference>
<dbReference type="GeneID" id="8626224"/>
<dbReference type="KEGG" id="ddi:DDB_G0287627"/>
<dbReference type="dictyBase" id="DDB_G0287627">
    <property type="gene designation" value="timm17"/>
</dbReference>
<dbReference type="VEuPathDB" id="AmoebaDB:DDB_G0287627"/>
<dbReference type="eggNOG" id="KOG1652">
    <property type="taxonomic scope" value="Eukaryota"/>
</dbReference>
<dbReference type="HOGENOM" id="CLU_087811_1_0_1"/>
<dbReference type="InParanoid" id="Q54K35"/>
<dbReference type="OMA" id="WEPCPWR"/>
<dbReference type="PhylomeDB" id="Q54K35"/>
<dbReference type="Reactome" id="R-DDI-1268020">
    <property type="pathway name" value="Mitochondrial protein import"/>
</dbReference>
<dbReference type="PRO" id="PR:Q54K35"/>
<dbReference type="Proteomes" id="UP000002195">
    <property type="component" value="Chromosome 5"/>
</dbReference>
<dbReference type="GO" id="GO:0005744">
    <property type="term" value="C:TIM23 mitochondrial import inner membrane translocase complex"/>
    <property type="evidence" value="ECO:0000318"/>
    <property type="project" value="GO_Central"/>
</dbReference>
<dbReference type="GO" id="GO:0030150">
    <property type="term" value="P:protein import into mitochondrial matrix"/>
    <property type="evidence" value="ECO:0000318"/>
    <property type="project" value="GO_Central"/>
</dbReference>
<dbReference type="PANTHER" id="PTHR10485:SF0">
    <property type="entry name" value="AT05822P-RELATED"/>
    <property type="match status" value="1"/>
</dbReference>
<dbReference type="PANTHER" id="PTHR10485">
    <property type="entry name" value="MITOCHONDRIAL IMPORT INNER MEMBRANE TRANSLOCASE SUBUNIT TIM-17"/>
    <property type="match status" value="1"/>
</dbReference>
<dbReference type="Pfam" id="PF02466">
    <property type="entry name" value="Tim17"/>
    <property type="match status" value="1"/>
</dbReference>
<evidence type="ECO:0000250" key="1"/>
<evidence type="ECO:0000255" key="2"/>
<evidence type="ECO:0000256" key="3">
    <source>
        <dbReference type="SAM" id="MobiDB-lite"/>
    </source>
</evidence>
<evidence type="ECO:0000305" key="4"/>
<name>TIM17_DICDI</name>
<sequence>MEAPCPDKIWQDAGGAFAIGYVLMGVVNIGLGFKRSPPNKRVLYTFALLRKKSPKFGGNFAIWGSLFSGFDCTLSYIRKTEDTVNPIAAGALTGGILAARSGWKHSVQAAAFGGIFIGIIEAFQHMMQKRMQAQQEEMTQQHLEERKRYEEERKQREGERKKLNENGKSKKNKQQQNGENDLD</sequence>
<organism>
    <name type="scientific">Dictyostelium discoideum</name>
    <name type="common">Social amoeba</name>
    <dbReference type="NCBI Taxonomy" id="44689"/>
    <lineage>
        <taxon>Eukaryota</taxon>
        <taxon>Amoebozoa</taxon>
        <taxon>Evosea</taxon>
        <taxon>Eumycetozoa</taxon>
        <taxon>Dictyostelia</taxon>
        <taxon>Dictyosteliales</taxon>
        <taxon>Dictyosteliaceae</taxon>
        <taxon>Dictyostelium</taxon>
    </lineage>
</organism>
<proteinExistence type="inferred from homology"/>
<reference key="1">
    <citation type="journal article" date="2005" name="Nature">
        <title>The genome of the social amoeba Dictyostelium discoideum.</title>
        <authorList>
            <person name="Eichinger L."/>
            <person name="Pachebat J.A."/>
            <person name="Gloeckner G."/>
            <person name="Rajandream M.A."/>
            <person name="Sucgang R."/>
            <person name="Berriman M."/>
            <person name="Song J."/>
            <person name="Olsen R."/>
            <person name="Szafranski K."/>
            <person name="Xu Q."/>
            <person name="Tunggal B."/>
            <person name="Kummerfeld S."/>
            <person name="Madera M."/>
            <person name="Konfortov B.A."/>
            <person name="Rivero F."/>
            <person name="Bankier A.T."/>
            <person name="Lehmann R."/>
            <person name="Hamlin N."/>
            <person name="Davies R."/>
            <person name="Gaudet P."/>
            <person name="Fey P."/>
            <person name="Pilcher K."/>
            <person name="Chen G."/>
            <person name="Saunders D."/>
            <person name="Sodergren E.J."/>
            <person name="Davis P."/>
            <person name="Kerhornou A."/>
            <person name="Nie X."/>
            <person name="Hall N."/>
            <person name="Anjard C."/>
            <person name="Hemphill L."/>
            <person name="Bason N."/>
            <person name="Farbrother P."/>
            <person name="Desany B."/>
            <person name="Just E."/>
            <person name="Morio T."/>
            <person name="Rost R."/>
            <person name="Churcher C.M."/>
            <person name="Cooper J."/>
            <person name="Haydock S."/>
            <person name="van Driessche N."/>
            <person name="Cronin A."/>
            <person name="Goodhead I."/>
            <person name="Muzny D.M."/>
            <person name="Mourier T."/>
            <person name="Pain A."/>
            <person name="Lu M."/>
            <person name="Harper D."/>
            <person name="Lindsay R."/>
            <person name="Hauser H."/>
            <person name="James K.D."/>
            <person name="Quiles M."/>
            <person name="Madan Babu M."/>
            <person name="Saito T."/>
            <person name="Buchrieser C."/>
            <person name="Wardroper A."/>
            <person name="Felder M."/>
            <person name="Thangavelu M."/>
            <person name="Johnson D."/>
            <person name="Knights A."/>
            <person name="Loulseged H."/>
            <person name="Mungall K.L."/>
            <person name="Oliver K."/>
            <person name="Price C."/>
            <person name="Quail M.A."/>
            <person name="Urushihara H."/>
            <person name="Hernandez J."/>
            <person name="Rabbinowitsch E."/>
            <person name="Steffen D."/>
            <person name="Sanders M."/>
            <person name="Ma J."/>
            <person name="Kohara Y."/>
            <person name="Sharp S."/>
            <person name="Simmonds M.N."/>
            <person name="Spiegler S."/>
            <person name="Tivey A."/>
            <person name="Sugano S."/>
            <person name="White B."/>
            <person name="Walker D."/>
            <person name="Woodward J.R."/>
            <person name="Winckler T."/>
            <person name="Tanaka Y."/>
            <person name="Shaulsky G."/>
            <person name="Schleicher M."/>
            <person name="Weinstock G.M."/>
            <person name="Rosenthal A."/>
            <person name="Cox E.C."/>
            <person name="Chisholm R.L."/>
            <person name="Gibbs R.A."/>
            <person name="Loomis W.F."/>
            <person name="Platzer M."/>
            <person name="Kay R.R."/>
            <person name="Williams J.G."/>
            <person name="Dear P.H."/>
            <person name="Noegel A.A."/>
            <person name="Barrell B.G."/>
            <person name="Kuspa A."/>
        </authorList>
    </citation>
    <scope>NUCLEOTIDE SEQUENCE [LARGE SCALE GENOMIC DNA]</scope>
    <source>
        <strain>AX4</strain>
    </source>
</reference>
<comment type="function">
    <text evidence="1">May be involved in the translocation of transit peptide-containing proteins across the mitochondrial inner membrane.</text>
</comment>
<comment type="subcellular location">
    <subcellularLocation>
        <location evidence="1">Mitochondrion inner membrane</location>
        <topology evidence="1">Multi-pass membrane protein</topology>
    </subcellularLocation>
</comment>
<comment type="similarity">
    <text evidence="4">Belongs to the Tim17/Tim22/Tim23 family.</text>
</comment>
<keyword id="KW-0472">Membrane</keyword>
<keyword id="KW-0496">Mitochondrion</keyword>
<keyword id="KW-0999">Mitochondrion inner membrane</keyword>
<keyword id="KW-0653">Protein transport</keyword>
<keyword id="KW-1185">Reference proteome</keyword>
<keyword id="KW-0811">Translocation</keyword>
<keyword id="KW-0812">Transmembrane</keyword>
<keyword id="KW-1133">Transmembrane helix</keyword>
<keyword id="KW-0813">Transport</keyword>
<protein>
    <recommendedName>
        <fullName>Mitochondrial import inner membrane translocase subunit tim17</fullName>
    </recommendedName>
</protein>
<feature type="chain" id="PRO_0000328273" description="Mitochondrial import inner membrane translocase subunit tim17">
    <location>
        <begin position="1"/>
        <end position="183"/>
    </location>
</feature>
<feature type="transmembrane region" description="Helical" evidence="2">
    <location>
        <begin position="13"/>
        <end position="33"/>
    </location>
</feature>
<feature type="transmembrane region" description="Helical" evidence="2">
    <location>
        <begin position="57"/>
        <end position="77"/>
    </location>
</feature>
<feature type="transmembrane region" description="Helical" evidence="2">
    <location>
        <begin position="107"/>
        <end position="127"/>
    </location>
</feature>
<feature type="region of interest" description="Disordered" evidence="3">
    <location>
        <begin position="131"/>
        <end position="183"/>
    </location>
</feature>
<feature type="compositionally biased region" description="Polar residues" evidence="3">
    <location>
        <begin position="131"/>
        <end position="141"/>
    </location>
</feature>
<feature type="compositionally biased region" description="Basic and acidic residues" evidence="3">
    <location>
        <begin position="142"/>
        <end position="168"/>
    </location>
</feature>
<feature type="compositionally biased region" description="Low complexity" evidence="3">
    <location>
        <begin position="174"/>
        <end position="183"/>
    </location>
</feature>
<gene>
    <name type="primary">timm17</name>
    <name type="synonym">tim17</name>
    <name type="ORF">DDB_G0287627</name>
</gene>